<proteinExistence type="evidence at protein level"/>
<accession>Q9UFD9</accession>
<accession>Q8IYP7</accession>
<accession>Q9BY94</accession>
<accession>Q9UFQ5</accession>
<dbReference type="EMBL" id="AC023490">
    <property type="status" value="NOT_ANNOTATED_CDS"/>
    <property type="molecule type" value="Genomic_DNA"/>
</dbReference>
<dbReference type="EMBL" id="AB051453">
    <property type="protein sequence ID" value="BAB33336.1"/>
    <property type="status" value="ALT_FRAME"/>
    <property type="molecule type" value="mRNA"/>
</dbReference>
<dbReference type="EMBL" id="AL117509">
    <property type="protein sequence ID" value="CAB55970.1"/>
    <property type="molecule type" value="mRNA"/>
</dbReference>
<dbReference type="EMBL" id="AL133030">
    <property type="protein sequence ID" value="CAB61362.2"/>
    <property type="status" value="ALT_INIT"/>
    <property type="molecule type" value="mRNA"/>
</dbReference>
<dbReference type="EMBL" id="BC035246">
    <property type="protein sequence ID" value="AAH35246.2"/>
    <property type="status" value="ALT_INIT"/>
    <property type="molecule type" value="mRNA"/>
</dbReference>
<dbReference type="CCDS" id="CCDS46665.1"/>
<dbReference type="PIR" id="T17280">
    <property type="entry name" value="T17280"/>
</dbReference>
<dbReference type="PIR" id="T42704">
    <property type="entry name" value="T42704"/>
</dbReference>
<dbReference type="RefSeq" id="NP_056487.1">
    <property type="nucleotide sequence ID" value="NM_015672.2"/>
</dbReference>
<dbReference type="PDB" id="2EGE">
    <property type="method" value="NMR"/>
    <property type="chains" value="A=1572-1639"/>
</dbReference>
<dbReference type="PDBsum" id="2EGE"/>
<dbReference type="SMR" id="Q9UFD9"/>
<dbReference type="BioGRID" id="124503">
    <property type="interactions" value="29"/>
</dbReference>
<dbReference type="CORUM" id="Q9UFD9"/>
<dbReference type="FunCoup" id="Q9UFD9">
    <property type="interactions" value="18"/>
</dbReference>
<dbReference type="IntAct" id="Q9UFD9">
    <property type="interactions" value="37"/>
</dbReference>
<dbReference type="STRING" id="9606.ENSP00000483386"/>
<dbReference type="GlyGen" id="Q9UFD9">
    <property type="glycosylation" value="1 site"/>
</dbReference>
<dbReference type="iPTMnet" id="Q9UFD9"/>
<dbReference type="PhosphoSitePlus" id="Q9UFD9"/>
<dbReference type="BioMuta" id="RIMBP3"/>
<dbReference type="DMDM" id="380865484"/>
<dbReference type="jPOST" id="Q9UFD9"/>
<dbReference type="MassIVE" id="Q9UFD9"/>
<dbReference type="PaxDb" id="9606-ENSP00000483386"/>
<dbReference type="PeptideAtlas" id="Q9UFD9"/>
<dbReference type="ProteomicsDB" id="84178"/>
<dbReference type="ABCD" id="Q9UFD9">
    <property type="antibodies" value="2 sequenced antibodies"/>
</dbReference>
<dbReference type="Antibodypedia" id="72644">
    <property type="antibodies" value="60 antibodies from 14 providers"/>
</dbReference>
<dbReference type="DNASU" id="85376"/>
<dbReference type="Ensembl" id="ENST00000619918.1">
    <property type="protein sequence ID" value="ENSP00000483386.1"/>
    <property type="gene ID" value="ENSG00000275793.1"/>
</dbReference>
<dbReference type="GeneID" id="85376"/>
<dbReference type="KEGG" id="hsa:85376"/>
<dbReference type="MANE-Select" id="ENST00000619918.1">
    <property type="protein sequence ID" value="ENSP00000483386.1"/>
    <property type="RefSeq nucleotide sequence ID" value="NM_015672.2"/>
    <property type="RefSeq protein sequence ID" value="NP_056487.1"/>
</dbReference>
<dbReference type="UCSC" id="uc002zsd.5">
    <property type="organism name" value="human"/>
</dbReference>
<dbReference type="AGR" id="HGNC:29344"/>
<dbReference type="CTD" id="85376"/>
<dbReference type="DisGeNET" id="85376"/>
<dbReference type="GeneCards" id="RIMBP3"/>
<dbReference type="HGNC" id="HGNC:29344">
    <property type="gene designation" value="RIMBP3"/>
</dbReference>
<dbReference type="HPA" id="ENSG00000275793">
    <property type="expression patterns" value="Tissue enriched (testis)"/>
</dbReference>
<dbReference type="MIM" id="612699">
    <property type="type" value="gene"/>
</dbReference>
<dbReference type="neXtProt" id="NX_Q9UFD9"/>
<dbReference type="OpenTargets" id="ENSG00000275793"/>
<dbReference type="VEuPathDB" id="HostDB:ENSG00000275793"/>
<dbReference type="eggNOG" id="KOG3632">
    <property type="taxonomic scope" value="Eukaryota"/>
</dbReference>
<dbReference type="GeneTree" id="ENSGT00950000183203"/>
<dbReference type="HOGENOM" id="CLU_001979_2_1_1"/>
<dbReference type="InParanoid" id="Q9UFD9"/>
<dbReference type="OMA" id="CQAFARQ"/>
<dbReference type="OrthoDB" id="4158657at2759"/>
<dbReference type="PAN-GO" id="Q9UFD9">
    <property type="GO annotations" value="5 GO annotations based on evolutionary models"/>
</dbReference>
<dbReference type="PhylomeDB" id="Q9UFD9"/>
<dbReference type="TreeFam" id="TF316230"/>
<dbReference type="PathwayCommons" id="Q9UFD9"/>
<dbReference type="SignaLink" id="Q9UFD9"/>
<dbReference type="SIGNOR" id="Q9UFD9"/>
<dbReference type="BioGRID-ORCS" id="85376">
    <property type="hits" value="17 hits in 670 CRISPR screens"/>
</dbReference>
<dbReference type="CD-CODE" id="B5B9A610">
    <property type="entry name" value="PML body"/>
</dbReference>
<dbReference type="EvolutionaryTrace" id="Q9UFD9"/>
<dbReference type="GenomeRNAi" id="85376"/>
<dbReference type="Pharos" id="Q9UFD9">
    <property type="development level" value="Tbio"/>
</dbReference>
<dbReference type="PRO" id="PR:Q9UFD9"/>
<dbReference type="Proteomes" id="UP000005640">
    <property type="component" value="Chromosome 22"/>
</dbReference>
<dbReference type="RNAct" id="Q9UFD9">
    <property type="molecule type" value="protein"/>
</dbReference>
<dbReference type="Bgee" id="ENSG00000275793">
    <property type="expression patterns" value="Expressed in left testis and 52 other cell types or tissues"/>
</dbReference>
<dbReference type="GO" id="GO:0005737">
    <property type="term" value="C:cytoplasm"/>
    <property type="evidence" value="ECO:0007669"/>
    <property type="project" value="UniProtKB-KW"/>
</dbReference>
<dbReference type="GO" id="GO:0005856">
    <property type="term" value="C:cytoskeleton"/>
    <property type="evidence" value="ECO:0007669"/>
    <property type="project" value="UniProtKB-SubCell"/>
</dbReference>
<dbReference type="GO" id="GO:0005634">
    <property type="term" value="C:nucleus"/>
    <property type="evidence" value="ECO:0000318"/>
    <property type="project" value="GO_Central"/>
</dbReference>
<dbReference type="GO" id="GO:0030156">
    <property type="term" value="F:benzodiazepine receptor binding"/>
    <property type="evidence" value="ECO:0000318"/>
    <property type="project" value="GO_Central"/>
</dbReference>
<dbReference type="GO" id="GO:0009566">
    <property type="term" value="P:fertilization"/>
    <property type="evidence" value="ECO:0000318"/>
    <property type="project" value="GO_Central"/>
</dbReference>
<dbReference type="GO" id="GO:0007286">
    <property type="term" value="P:spermatid development"/>
    <property type="evidence" value="ECO:0000318"/>
    <property type="project" value="GO_Central"/>
</dbReference>
<dbReference type="CDD" id="cd00063">
    <property type="entry name" value="FN3"/>
    <property type="match status" value="1"/>
</dbReference>
<dbReference type="CDD" id="cd11851">
    <property type="entry name" value="SH3_RIM-BP"/>
    <property type="match status" value="1"/>
</dbReference>
<dbReference type="CDD" id="cd12014">
    <property type="entry name" value="SH3_RIM-BP_1"/>
    <property type="match status" value="1"/>
</dbReference>
<dbReference type="CDD" id="cd22249">
    <property type="entry name" value="UDM1_RNF168_RNF169-like"/>
    <property type="match status" value="1"/>
</dbReference>
<dbReference type="FunFam" id="2.30.30.40:FF:000006">
    <property type="entry name" value="RIMS-binding protein 2 isoform X1"/>
    <property type="match status" value="1"/>
</dbReference>
<dbReference type="FunFam" id="2.60.40.10:FF:000072">
    <property type="entry name" value="RIMS-binding protein 2 isoform X1"/>
    <property type="match status" value="1"/>
</dbReference>
<dbReference type="FunFam" id="2.30.30.40:FF:000232">
    <property type="entry name" value="RIMS-binding protein 3A-like"/>
    <property type="match status" value="1"/>
</dbReference>
<dbReference type="FunFam" id="2.30.30.40:FF:000246">
    <property type="entry name" value="RIMS-binding protein 3A-like"/>
    <property type="match status" value="1"/>
</dbReference>
<dbReference type="Gene3D" id="2.60.40.10">
    <property type="entry name" value="Immunoglobulins"/>
    <property type="match status" value="2"/>
</dbReference>
<dbReference type="Gene3D" id="2.30.30.40">
    <property type="entry name" value="SH3 Domains"/>
    <property type="match status" value="3"/>
</dbReference>
<dbReference type="InterPro" id="IPR003961">
    <property type="entry name" value="FN3_dom"/>
</dbReference>
<dbReference type="InterPro" id="IPR036116">
    <property type="entry name" value="FN3_sf"/>
</dbReference>
<dbReference type="InterPro" id="IPR013783">
    <property type="entry name" value="Ig-like_fold"/>
</dbReference>
<dbReference type="InterPro" id="IPR040325">
    <property type="entry name" value="RIMBP1/2/3"/>
</dbReference>
<dbReference type="InterPro" id="IPR036028">
    <property type="entry name" value="SH3-like_dom_sf"/>
</dbReference>
<dbReference type="InterPro" id="IPR001452">
    <property type="entry name" value="SH3_domain"/>
</dbReference>
<dbReference type="PANTHER" id="PTHR14234">
    <property type="entry name" value="RIM BINDING PROTEIN-RELATED"/>
    <property type="match status" value="1"/>
</dbReference>
<dbReference type="PANTHER" id="PTHR14234:SF21">
    <property type="entry name" value="RIMS-BINDING PROTEIN 3A-RELATED"/>
    <property type="match status" value="1"/>
</dbReference>
<dbReference type="Pfam" id="PF07653">
    <property type="entry name" value="SH3_2"/>
    <property type="match status" value="2"/>
</dbReference>
<dbReference type="SMART" id="SM00326">
    <property type="entry name" value="SH3"/>
    <property type="match status" value="3"/>
</dbReference>
<dbReference type="SUPFAM" id="SSF49265">
    <property type="entry name" value="Fibronectin type III"/>
    <property type="match status" value="1"/>
</dbReference>
<dbReference type="SUPFAM" id="SSF50044">
    <property type="entry name" value="SH3-domain"/>
    <property type="match status" value="3"/>
</dbReference>
<dbReference type="PROSITE" id="PS50853">
    <property type="entry name" value="FN3"/>
    <property type="match status" value="2"/>
</dbReference>
<dbReference type="PROSITE" id="PS50002">
    <property type="entry name" value="SH3"/>
    <property type="match status" value="3"/>
</dbReference>
<reference key="1">
    <citation type="journal article" date="1999" name="Nature">
        <title>The DNA sequence of human chromosome 22.</title>
        <authorList>
            <person name="Dunham I."/>
            <person name="Hunt A.R."/>
            <person name="Collins J.E."/>
            <person name="Bruskiewich R."/>
            <person name="Beare D.M."/>
            <person name="Clamp M."/>
            <person name="Smink L.J."/>
            <person name="Ainscough R."/>
            <person name="Almeida J.P."/>
            <person name="Babbage A.K."/>
            <person name="Bagguley C."/>
            <person name="Bailey J."/>
            <person name="Barlow K.F."/>
            <person name="Bates K.N."/>
            <person name="Beasley O.P."/>
            <person name="Bird C.P."/>
            <person name="Blakey S.E."/>
            <person name="Bridgeman A.M."/>
            <person name="Buck D."/>
            <person name="Burgess J."/>
            <person name="Burrill W.D."/>
            <person name="Burton J."/>
            <person name="Carder C."/>
            <person name="Carter N.P."/>
            <person name="Chen Y."/>
            <person name="Clark G."/>
            <person name="Clegg S.M."/>
            <person name="Cobley V.E."/>
            <person name="Cole C.G."/>
            <person name="Collier R.E."/>
            <person name="Connor R."/>
            <person name="Conroy D."/>
            <person name="Corby N.R."/>
            <person name="Coville G.J."/>
            <person name="Cox A.V."/>
            <person name="Davis J."/>
            <person name="Dawson E."/>
            <person name="Dhami P.D."/>
            <person name="Dockree C."/>
            <person name="Dodsworth S.J."/>
            <person name="Durbin R.M."/>
            <person name="Ellington A.G."/>
            <person name="Evans K.L."/>
            <person name="Fey J.M."/>
            <person name="Fleming K."/>
            <person name="French L."/>
            <person name="Garner A.A."/>
            <person name="Gilbert J.G.R."/>
            <person name="Goward M.E."/>
            <person name="Grafham D.V."/>
            <person name="Griffiths M.N.D."/>
            <person name="Hall C."/>
            <person name="Hall R.E."/>
            <person name="Hall-Tamlyn G."/>
            <person name="Heathcott R.W."/>
            <person name="Ho S."/>
            <person name="Holmes S."/>
            <person name="Hunt S.E."/>
            <person name="Jones M.C."/>
            <person name="Kershaw J."/>
            <person name="Kimberley A.M."/>
            <person name="King A."/>
            <person name="Laird G.K."/>
            <person name="Langford C.F."/>
            <person name="Leversha M.A."/>
            <person name="Lloyd C."/>
            <person name="Lloyd D.M."/>
            <person name="Martyn I.D."/>
            <person name="Mashreghi-Mohammadi M."/>
            <person name="Matthews L.H."/>
            <person name="Mccann O.T."/>
            <person name="Mcclay J."/>
            <person name="Mclaren S."/>
            <person name="McMurray A.A."/>
            <person name="Milne S.A."/>
            <person name="Mortimore B.J."/>
            <person name="Odell C.N."/>
            <person name="Pavitt R."/>
            <person name="Pearce A.V."/>
            <person name="Pearson D."/>
            <person name="Phillimore B.J.C.T."/>
            <person name="Phillips S.H."/>
            <person name="Plumb R.W."/>
            <person name="Ramsay H."/>
            <person name="Ramsey Y."/>
            <person name="Rogers L."/>
            <person name="Ross M.T."/>
            <person name="Scott C.E."/>
            <person name="Sehra H.K."/>
            <person name="Skuce C.D."/>
            <person name="Smalley S."/>
            <person name="Smith M.L."/>
            <person name="Soderlund C."/>
            <person name="Spragon L."/>
            <person name="Steward C.A."/>
            <person name="Sulston J.E."/>
            <person name="Swann R.M."/>
            <person name="Vaudin M."/>
            <person name="Wall M."/>
            <person name="Wallis J.M."/>
            <person name="Whiteley M.N."/>
            <person name="Willey D.L."/>
            <person name="Williams L."/>
            <person name="Williams S.A."/>
            <person name="Williamson H."/>
            <person name="Wilmer T.E."/>
            <person name="Wilming L."/>
            <person name="Wright C.L."/>
            <person name="Hubbard T."/>
            <person name="Bentley D.R."/>
            <person name="Beck S."/>
            <person name="Rogers J."/>
            <person name="Shimizu N."/>
            <person name="Minoshima S."/>
            <person name="Kawasaki K."/>
            <person name="Sasaki T."/>
            <person name="Asakawa S."/>
            <person name="Kudoh J."/>
            <person name="Shintani A."/>
            <person name="Shibuya K."/>
            <person name="Yoshizaki Y."/>
            <person name="Aoki N."/>
            <person name="Mitsuyama S."/>
            <person name="Roe B.A."/>
            <person name="Chen F."/>
            <person name="Chu L."/>
            <person name="Crabtree J."/>
            <person name="Deschamps S."/>
            <person name="Do A."/>
            <person name="Do T."/>
            <person name="Dorman A."/>
            <person name="Fang F."/>
            <person name="Fu Y."/>
            <person name="Hu P."/>
            <person name="Hua A."/>
            <person name="Kenton S."/>
            <person name="Lai H."/>
            <person name="Lao H.I."/>
            <person name="Lewis J."/>
            <person name="Lewis S."/>
            <person name="Lin S.-P."/>
            <person name="Loh P."/>
            <person name="Malaj E."/>
            <person name="Nguyen T."/>
            <person name="Pan H."/>
            <person name="Phan S."/>
            <person name="Qi S."/>
            <person name="Qian Y."/>
            <person name="Ray L."/>
            <person name="Ren Q."/>
            <person name="Shaull S."/>
            <person name="Sloan D."/>
            <person name="Song L."/>
            <person name="Wang Q."/>
            <person name="Wang Y."/>
            <person name="Wang Z."/>
            <person name="White J."/>
            <person name="Willingham D."/>
            <person name="Wu H."/>
            <person name="Yao Z."/>
            <person name="Zhan M."/>
            <person name="Zhang G."/>
            <person name="Chissoe S."/>
            <person name="Murray J."/>
            <person name="Miller N."/>
            <person name="Minx P."/>
            <person name="Fulton R."/>
            <person name="Johnson D."/>
            <person name="Bemis G."/>
            <person name="Bentley D."/>
            <person name="Bradshaw H."/>
            <person name="Bourne S."/>
            <person name="Cordes M."/>
            <person name="Du Z."/>
            <person name="Fulton L."/>
            <person name="Goela D."/>
            <person name="Graves T."/>
            <person name="Hawkins J."/>
            <person name="Hinds K."/>
            <person name="Kemp K."/>
            <person name="Latreille P."/>
            <person name="Layman D."/>
            <person name="Ozersky P."/>
            <person name="Rohlfing T."/>
            <person name="Scheet P."/>
            <person name="Walker C."/>
            <person name="Wamsley A."/>
            <person name="Wohldmann P."/>
            <person name="Pepin K."/>
            <person name="Nelson J."/>
            <person name="Korf I."/>
            <person name="Bedell J.A."/>
            <person name="Hillier L.W."/>
            <person name="Mardis E."/>
            <person name="Waterston R."/>
            <person name="Wilson R."/>
            <person name="Emanuel B.S."/>
            <person name="Shaikh T."/>
            <person name="Kurahashi H."/>
            <person name="Saitta S."/>
            <person name="Budarf M.L."/>
            <person name="McDermid H.E."/>
            <person name="Johnson A."/>
            <person name="Wong A.C.C."/>
            <person name="Morrow B.E."/>
            <person name="Edelmann L."/>
            <person name="Kim U.J."/>
            <person name="Shizuya H."/>
            <person name="Simon M.I."/>
            <person name="Dumanski J.P."/>
            <person name="Peyrard M."/>
            <person name="Kedra D."/>
            <person name="Seroussi E."/>
            <person name="Fransson I."/>
            <person name="Tapia I."/>
            <person name="Bruder C.E."/>
            <person name="O'Brien K.P."/>
            <person name="Wilkinson P."/>
            <person name="Bodenteich A."/>
            <person name="Hartman K."/>
            <person name="Hu X."/>
            <person name="Khan A.S."/>
            <person name="Lane L."/>
            <person name="Tilahun Y."/>
            <person name="Wright H."/>
        </authorList>
    </citation>
    <scope>NUCLEOTIDE SEQUENCE [LARGE SCALE GENOMIC DNA]</scope>
</reference>
<reference key="2">
    <citation type="journal article" date="2001" name="DNA Res.">
        <title>Identification of novel transcribed sequences on human chromosome 22 by expressed sequence tag mapping.</title>
        <authorList>
            <person name="Hirosawa M."/>
            <person name="Nagase T."/>
            <person name="Murahashi Y."/>
            <person name="Kikuno R."/>
            <person name="Ohara O."/>
        </authorList>
    </citation>
    <scope>NUCLEOTIDE SEQUENCE [LARGE SCALE MRNA] OF 50-1639</scope>
    <scope>VARIANT CYS-1513</scope>
    <source>
        <tissue>Brain</tissue>
    </source>
</reference>
<reference key="3">
    <citation type="journal article" date="2007" name="BMC Genomics">
        <title>The full-ORF clone resource of the German cDNA consortium.</title>
        <authorList>
            <person name="Bechtel S."/>
            <person name="Rosenfelder H."/>
            <person name="Duda A."/>
            <person name="Schmidt C.P."/>
            <person name="Ernst U."/>
            <person name="Wellenreuther R."/>
            <person name="Mehrle A."/>
            <person name="Schuster C."/>
            <person name="Bahr A."/>
            <person name="Bloecker H."/>
            <person name="Heubner D."/>
            <person name="Hoerlein A."/>
            <person name="Michel G."/>
            <person name="Wedler H."/>
            <person name="Koehrer K."/>
            <person name="Ottenwaelder B."/>
            <person name="Poustka A."/>
            <person name="Wiemann S."/>
            <person name="Schupp I."/>
        </authorList>
    </citation>
    <scope>NUCLEOTIDE SEQUENCE [LARGE SCALE MRNA] OF 473-1639</scope>
    <source>
        <tissue>Testis</tissue>
    </source>
</reference>
<reference key="4">
    <citation type="journal article" date="2004" name="Genome Res.">
        <title>The status, quality, and expansion of the NIH full-length cDNA project: the Mammalian Gene Collection (MGC).</title>
        <authorList>
            <consortium name="The MGC Project Team"/>
        </authorList>
    </citation>
    <scope>NUCLEOTIDE SEQUENCE [LARGE SCALE MRNA] OF 753-1639</scope>
    <scope>VARIANT CYS-1513</scope>
    <source>
        <tissue>Testis</tissue>
    </source>
</reference>
<reference key="5">
    <citation type="submission" date="2007-08" db="PDB data bank">
        <title>Solution structure of the third SH3 domain from human KIAA1666 protein.</title>
        <authorList>
            <consortium name="RIKEN structural genomics initiative (RSGI)"/>
        </authorList>
    </citation>
    <scope>STRUCTURE BY NMR OF 1572-1639</scope>
</reference>
<keyword id="KW-0002">3D-structure</keyword>
<keyword id="KW-0175">Coiled coil</keyword>
<keyword id="KW-0963">Cytoplasm</keyword>
<keyword id="KW-0206">Cytoskeleton</keyword>
<keyword id="KW-0221">Differentiation</keyword>
<keyword id="KW-1267">Proteomics identification</keyword>
<keyword id="KW-1185">Reference proteome</keyword>
<keyword id="KW-0677">Repeat</keyword>
<keyword id="KW-0728">SH3 domain</keyword>
<keyword id="KW-0744">Spermatogenesis</keyword>
<feature type="chain" id="PRO_0000259597" description="RIMS-binding protein 3A">
    <location>
        <begin position="1"/>
        <end position="1639"/>
    </location>
</feature>
<feature type="domain" description="SH3 1" evidence="3">
    <location>
        <begin position="832"/>
        <end position="899"/>
    </location>
</feature>
<feature type="domain" description="Fibronectin type-III 1" evidence="4">
    <location>
        <begin position="995"/>
        <end position="1083"/>
    </location>
</feature>
<feature type="domain" description="Fibronectin type-III 2" evidence="4">
    <location>
        <begin position="1088"/>
        <end position="1184"/>
    </location>
</feature>
<feature type="domain" description="SH3 2" evidence="3">
    <location>
        <begin position="1452"/>
        <end position="1520"/>
    </location>
</feature>
<feature type="domain" description="SH3 3" evidence="3">
    <location>
        <begin position="1569"/>
        <end position="1636"/>
    </location>
</feature>
<feature type="region of interest" description="Disordered" evidence="5">
    <location>
        <begin position="1"/>
        <end position="22"/>
    </location>
</feature>
<feature type="region of interest" description="Disordered" evidence="5">
    <location>
        <begin position="215"/>
        <end position="240"/>
    </location>
</feature>
<feature type="region of interest" description="Disordered" evidence="5">
    <location>
        <begin position="295"/>
        <end position="364"/>
    </location>
</feature>
<feature type="region of interest" description="Disordered" evidence="5">
    <location>
        <begin position="697"/>
        <end position="811"/>
    </location>
</feature>
<feature type="region of interest" description="Disordered" evidence="5">
    <location>
        <begin position="1251"/>
        <end position="1273"/>
    </location>
</feature>
<feature type="region of interest" description="Disordered" evidence="5">
    <location>
        <begin position="1292"/>
        <end position="1330"/>
    </location>
</feature>
<feature type="coiled-coil region" evidence="2">
    <location>
        <begin position="21"/>
        <end position="143"/>
    </location>
</feature>
<feature type="coiled-coil region" evidence="2">
    <location>
        <begin position="409"/>
        <end position="442"/>
    </location>
</feature>
<feature type="coiled-coil region" evidence="2">
    <location>
        <begin position="480"/>
        <end position="619"/>
    </location>
</feature>
<feature type="compositionally biased region" description="Pro residues" evidence="5">
    <location>
        <begin position="326"/>
        <end position="339"/>
    </location>
</feature>
<feature type="compositionally biased region" description="Polar residues" evidence="5">
    <location>
        <begin position="707"/>
        <end position="718"/>
    </location>
</feature>
<feature type="compositionally biased region" description="Polar residues" evidence="5">
    <location>
        <begin position="761"/>
        <end position="775"/>
    </location>
</feature>
<feature type="compositionally biased region" description="Low complexity" evidence="5">
    <location>
        <begin position="776"/>
        <end position="790"/>
    </location>
</feature>
<feature type="compositionally biased region" description="Polar residues" evidence="5">
    <location>
        <begin position="1293"/>
        <end position="1305"/>
    </location>
</feature>
<feature type="sequence variant" id="VAR_028969" description="In dbSNP:rs374395444." evidence="6 7">
    <original>R</original>
    <variation>C</variation>
    <location>
        <position position="1513"/>
    </location>
</feature>
<feature type="sequence conflict" description="In Ref. 2; BAB33336." evidence="8" ref="2">
    <original>A</original>
    <variation>E</variation>
    <location>
        <position position="396"/>
    </location>
</feature>
<feature type="sequence conflict" description="In Ref. 2; BAB33336." evidence="8" ref="2">
    <original>K</original>
    <variation>E</variation>
    <location>
        <position position="437"/>
    </location>
</feature>
<feature type="sequence conflict" description="In Ref. 2; BAB33336." evidence="8" ref="2">
    <original>S</original>
    <variation>P</variation>
    <location>
        <position position="653"/>
    </location>
</feature>
<feature type="sequence conflict" description="In Ref. 2; BAB33336." evidence="8" ref="2">
    <original>E</original>
    <variation>D</variation>
    <location>
        <position position="882"/>
    </location>
</feature>
<feature type="sequence conflict" description="In Ref. 4; AAH35246." evidence="8" ref="4">
    <original>P</original>
    <variation>T</variation>
    <location>
        <position position="1307"/>
    </location>
</feature>
<feature type="sequence conflict" description="In Ref. 3; CAB61362 and 4; AAH35246." evidence="8" ref="3 4">
    <original>S</original>
    <variation>Y</variation>
    <location>
        <position position="1314"/>
    </location>
</feature>
<feature type="sequence conflict" description="In Ref. 4; AAH35246." evidence="8" ref="4">
    <original>W</original>
    <variation>R</variation>
    <location>
        <position position="1391"/>
    </location>
</feature>
<feature type="sequence conflict" description="In Ref. 2; BAB33336." evidence="8" ref="2">
    <original>R</original>
    <variation>K</variation>
    <location>
        <position position="1484"/>
    </location>
</feature>
<feature type="sequence conflict" description="In Ref. 2; BAB33336, 3; CAB55970 and 4; AAH35246." evidence="8" ref="2 3 4">
    <original>N</original>
    <variation>H</variation>
    <location>
        <position position="1536"/>
    </location>
</feature>
<feature type="strand" evidence="9">
    <location>
        <begin position="1572"/>
        <end position="1578"/>
    </location>
</feature>
<feature type="turn" evidence="9">
    <location>
        <begin position="1582"/>
        <end position="1585"/>
    </location>
</feature>
<feature type="strand" evidence="9">
    <location>
        <begin position="1589"/>
        <end position="1591"/>
    </location>
</feature>
<feature type="strand" evidence="9">
    <location>
        <begin position="1602"/>
        <end position="1607"/>
    </location>
</feature>
<feature type="strand" evidence="9">
    <location>
        <begin position="1614"/>
        <end position="1621"/>
    </location>
</feature>
<feature type="strand" evidence="9">
    <location>
        <begin position="1623"/>
        <end position="1627"/>
    </location>
</feature>
<feature type="turn" evidence="9">
    <location>
        <begin position="1628"/>
        <end position="1630"/>
    </location>
</feature>
<feature type="strand" evidence="9">
    <location>
        <begin position="1631"/>
        <end position="1633"/>
    </location>
</feature>
<evidence type="ECO:0000250" key="1">
    <source>
        <dbReference type="UniProtKB" id="Q3V0F0"/>
    </source>
</evidence>
<evidence type="ECO:0000255" key="2"/>
<evidence type="ECO:0000255" key="3">
    <source>
        <dbReference type="PROSITE-ProRule" id="PRU00192"/>
    </source>
</evidence>
<evidence type="ECO:0000255" key="4">
    <source>
        <dbReference type="PROSITE-ProRule" id="PRU00316"/>
    </source>
</evidence>
<evidence type="ECO:0000256" key="5">
    <source>
        <dbReference type="SAM" id="MobiDB-lite"/>
    </source>
</evidence>
<evidence type="ECO:0000269" key="6">
    <source>
    </source>
</evidence>
<evidence type="ECO:0000269" key="7">
    <source>
    </source>
</evidence>
<evidence type="ECO:0000305" key="8"/>
<evidence type="ECO:0007829" key="9">
    <source>
        <dbReference type="PDB" id="2EGE"/>
    </source>
</evidence>
<comment type="function">
    <text evidence="1">Probable component of the manchette, a microtubule-based structure which plays a key role in sperm head morphogenesis during late stages of sperm development.</text>
</comment>
<comment type="subunit">
    <text evidence="1">Interacts with LRGUK (via guanylate kinase-like domain). Interacts (via C-terminus) with HOOK1 (via coiled-coil region).</text>
</comment>
<comment type="interaction">
    <interactant intactId="EBI-10182375">
        <id>Q9UFD9</id>
    </interactant>
    <interactant intactId="EBI-2809489">
        <id>Q9NQ94</id>
        <label>A1CF</label>
    </interactant>
    <organismsDiffer>false</organismsDiffer>
    <experiments>3</experiments>
</comment>
<comment type="interaction">
    <interactant intactId="EBI-10182375">
        <id>Q9UFD9</id>
    </interactant>
    <interactant intactId="EBI-745213">
        <id>P29972</id>
        <label>AQP1</label>
    </interactant>
    <organismsDiffer>false</organismsDiffer>
    <experiments>3</experiments>
</comment>
<comment type="interaction">
    <interactant intactId="EBI-10182375">
        <id>Q9UFD9</id>
    </interactant>
    <interactant intactId="EBI-7317823">
        <id>Q6P5X5</id>
        <label>C22orf39</label>
    </interactant>
    <organismsDiffer>false</organismsDiffer>
    <experiments>3</experiments>
</comment>
<comment type="interaction">
    <interactant intactId="EBI-10182375">
        <id>Q9UFD9</id>
    </interactant>
    <interactant intactId="EBI-744545">
        <id>Q8NEC5</id>
        <label>CATSPER1</label>
    </interactant>
    <organismsDiffer>false</organismsDiffer>
    <experiments>3</experiments>
</comment>
<comment type="interaction">
    <interactant intactId="EBI-10182375">
        <id>Q9UFD9</id>
    </interactant>
    <interactant intactId="EBI-10192698">
        <id>Q02930-3</id>
        <label>CREB5</label>
    </interactant>
    <organismsDiffer>false</organismsDiffer>
    <experiments>3</experiments>
</comment>
<comment type="interaction">
    <interactant intactId="EBI-10182375">
        <id>Q9UFD9</id>
    </interactant>
    <interactant intactId="EBI-10171902">
        <id>P56545-3</id>
        <label>CTBP2</label>
    </interactant>
    <organismsDiffer>false</organismsDiffer>
    <experiments>3</experiments>
</comment>
<comment type="interaction">
    <interactant intactId="EBI-10182375">
        <id>Q9UFD9</id>
    </interactant>
    <interactant intactId="EBI-742953">
        <id>Q9BY27</id>
        <label>DGCR6L</label>
    </interactant>
    <organismsDiffer>false</organismsDiffer>
    <experiments>3</experiments>
</comment>
<comment type="interaction">
    <interactant intactId="EBI-10182375">
        <id>Q9UFD9</id>
    </interactant>
    <interactant intactId="EBI-740376">
        <id>Q86UW9</id>
        <label>DTX2</label>
    </interactant>
    <organismsDiffer>false</organismsDiffer>
    <experiments>3</experiments>
</comment>
<comment type="interaction">
    <interactant intactId="EBI-10182375">
        <id>Q9UFD9</id>
    </interactant>
    <interactant intactId="EBI-743105">
        <id>Q5JVL4</id>
        <label>EFHC1</label>
    </interactant>
    <organismsDiffer>false</organismsDiffer>
    <experiments>3</experiments>
</comment>
<comment type="interaction">
    <interactant intactId="EBI-10182375">
        <id>Q9UFD9</id>
    </interactant>
    <interactant intactId="EBI-2339898">
        <id>Q9NW38</id>
        <label>FANCL</label>
    </interactant>
    <organismsDiffer>false</organismsDiffer>
    <experiments>3</experiments>
</comment>
<comment type="interaction">
    <interactant intactId="EBI-10182375">
        <id>Q9UFD9</id>
    </interactant>
    <interactant intactId="EBI-2513774">
        <id>O95363</id>
        <label>FARS2</label>
    </interactant>
    <organismsDiffer>false</organismsDiffer>
    <experiments>3</experiments>
</comment>
<comment type="interaction">
    <interactant intactId="EBI-10182375">
        <id>Q9UFD9</id>
    </interactant>
    <interactant intactId="EBI-725515">
        <id>O43559</id>
        <label>FRS3</label>
    </interactant>
    <organismsDiffer>false</organismsDiffer>
    <experiments>3</experiments>
</comment>
<comment type="interaction">
    <interactant intactId="EBI-10182375">
        <id>Q9UFD9</id>
    </interactant>
    <interactant intactId="EBI-751540">
        <id>O95872</id>
        <label>GPANK1</label>
    </interactant>
    <organismsDiffer>false</organismsDiffer>
    <experiments>3</experiments>
</comment>
<comment type="interaction">
    <interactant intactId="EBI-10182375">
        <id>Q9UFD9</id>
    </interactant>
    <interactant intactId="EBI-715611">
        <id>Q9C086</id>
        <label>INO80B</label>
    </interactant>
    <organismsDiffer>false</organismsDiffer>
    <experiments>3</experiments>
</comment>
<comment type="interaction">
    <interactant intactId="EBI-10182375">
        <id>Q9UFD9</id>
    </interactant>
    <interactant intactId="EBI-10274069">
        <id>Q8TCE9</id>
        <label>LGALS14</label>
    </interactant>
    <organismsDiffer>false</organismsDiffer>
    <experiments>3</experiments>
</comment>
<comment type="interaction">
    <interactant intactId="EBI-10182375">
        <id>Q9UFD9</id>
    </interactant>
    <interactant intactId="EBI-2341787">
        <id>Q17RB8</id>
        <label>LONRF1</label>
    </interactant>
    <organismsDiffer>false</organismsDiffer>
    <experiments>3</experiments>
</comment>
<comment type="interaction">
    <interactant intactId="EBI-10182375">
        <id>Q9UFD9</id>
    </interactant>
    <interactant intactId="EBI-11750983">
        <id>Q9HC98-4</id>
        <label>NEK6</label>
    </interactant>
    <organismsDiffer>false</organismsDiffer>
    <experiments>3</experiments>
</comment>
<comment type="interaction">
    <interactant intactId="EBI-10182375">
        <id>Q9UFD9</id>
    </interactant>
    <interactant intactId="EBI-949814">
        <id>Q86UR1</id>
        <label>NOXA1</label>
    </interactant>
    <organismsDiffer>false</organismsDiffer>
    <experiments>4</experiments>
</comment>
<comment type="interaction">
    <interactant intactId="EBI-10182375">
        <id>Q9UFD9</id>
    </interactant>
    <interactant intactId="EBI-12025760">
        <id>Q86UR1-2</id>
        <label>NOXA1</label>
    </interactant>
    <organismsDiffer>false</organismsDiffer>
    <experiments>3</experiments>
</comment>
<comment type="interaction">
    <interactant intactId="EBI-10182375">
        <id>Q9UFD9</id>
    </interactant>
    <interactant intactId="EBI-1055079">
        <id>O15160</id>
        <label>POLR1C</label>
    </interactant>
    <organismsDiffer>false</organismsDiffer>
    <experiments>6</experiments>
</comment>
<comment type="interaction">
    <interactant intactId="EBI-10182375">
        <id>Q9UFD9</id>
    </interactant>
    <interactant intactId="EBI-2557649">
        <id>Q9Y3C6</id>
        <label>PPIL1</label>
    </interactant>
    <organismsDiffer>false</organismsDiffer>
    <experiments>3</experiments>
</comment>
<comment type="interaction">
    <interactant intactId="EBI-10182375">
        <id>Q9UFD9</id>
    </interactant>
    <interactant intactId="EBI-1181405">
        <id>Q13131</id>
        <label>PRKAA1</label>
    </interactant>
    <organismsDiffer>false</organismsDiffer>
    <experiments>3</experiments>
</comment>
<comment type="interaction">
    <interactant intactId="EBI-10182375">
        <id>Q9UFD9</id>
    </interactant>
    <interactant intactId="EBI-1053424">
        <id>O43741</id>
        <label>PRKAB2</label>
    </interactant>
    <organismsDiffer>false</organismsDiffer>
    <experiments>4</experiments>
</comment>
<comment type="interaction">
    <interactant intactId="EBI-10182375">
        <id>Q9UFD9</id>
    </interactant>
    <interactant intactId="EBI-12000762">
        <id>Q7Z5V6-2</id>
        <label>SAXO4</label>
    </interactant>
    <organismsDiffer>false</organismsDiffer>
    <experiments>3</experiments>
</comment>
<comment type="interaction">
    <interactant intactId="EBI-10182375">
        <id>Q9UFD9</id>
    </interactant>
    <interactant intactId="EBI-752030">
        <id>Q96A09</id>
        <label>TENT5B</label>
    </interactant>
    <organismsDiffer>false</organismsDiffer>
    <experiments>3</experiments>
</comment>
<comment type="interaction">
    <interactant intactId="EBI-10182375">
        <id>Q9UFD9</id>
    </interactant>
    <interactant intactId="EBI-717810">
        <id>Q08117</id>
        <label>TLE5</label>
    </interactant>
    <organismsDiffer>false</organismsDiffer>
    <experiments>3</experiments>
</comment>
<comment type="interaction">
    <interactant intactId="EBI-10182375">
        <id>Q9UFD9</id>
    </interactant>
    <interactant intactId="EBI-744798">
        <id>O43734</id>
        <label>TRAF3IP2</label>
    </interactant>
    <organismsDiffer>false</organismsDiffer>
    <experiments>3</experiments>
</comment>
<comment type="interaction">
    <interactant intactId="EBI-10182375">
        <id>Q9UFD9</id>
    </interactant>
    <interactant intactId="EBI-948288">
        <id>Q96MN9</id>
        <label>ZNF488</label>
    </interactant>
    <organismsDiffer>false</organismsDiffer>
    <experiments>3</experiments>
</comment>
<comment type="interaction">
    <interactant intactId="EBI-10182375">
        <id>Q9UFD9</id>
    </interactant>
    <interactant intactId="EBI-745520">
        <id>Q9P0T4</id>
        <label>ZNF581</label>
    </interactant>
    <organismsDiffer>false</organismsDiffer>
    <experiments>3</experiments>
</comment>
<comment type="subcellular location">
    <subcellularLocation>
        <location evidence="1">Cytoplasm</location>
        <location evidence="1">Cytoskeleton</location>
    </subcellularLocation>
    <text evidence="1">In elongating spermatids, localizes to the manchette.</text>
</comment>
<comment type="similarity">
    <text evidence="8">Belongs to the RIMBP family.</text>
</comment>
<comment type="sequence caution" evidence="8">
    <conflict type="erroneous initiation">
        <sequence resource="EMBL-CDS" id="AAH35246"/>
    </conflict>
    <text>Truncated N-terminus.</text>
</comment>
<comment type="sequence caution" evidence="8">
    <conflict type="frameshift">
        <sequence resource="EMBL-CDS" id="BAB33336"/>
    </conflict>
</comment>
<comment type="sequence caution" evidence="8">
    <conflict type="erroneous initiation">
        <sequence resource="EMBL-CDS" id="CAB61362"/>
    </conflict>
    <text>Truncated N-terminus.</text>
</comment>
<name>RIM3A_HUMAN</name>
<organism>
    <name type="scientific">Homo sapiens</name>
    <name type="common">Human</name>
    <dbReference type="NCBI Taxonomy" id="9606"/>
    <lineage>
        <taxon>Eukaryota</taxon>
        <taxon>Metazoa</taxon>
        <taxon>Chordata</taxon>
        <taxon>Craniata</taxon>
        <taxon>Vertebrata</taxon>
        <taxon>Euteleostomi</taxon>
        <taxon>Mammalia</taxon>
        <taxon>Eutheria</taxon>
        <taxon>Euarchontoglires</taxon>
        <taxon>Primates</taxon>
        <taxon>Haplorrhini</taxon>
        <taxon>Catarrhini</taxon>
        <taxon>Hominidae</taxon>
        <taxon>Homo</taxon>
    </lineage>
</organism>
<protein>
    <recommendedName>
        <fullName>RIMS-binding protein 3A</fullName>
        <shortName>RIM-BP3.A</shortName>
    </recommendedName>
    <alternativeName>
        <fullName>RIMS-binding protein 3.1</fullName>
        <shortName>RIM-BP3.1</shortName>
    </alternativeName>
</protein>
<sequence>MAKDSPSPLGASPKKPGCSSPAAAVLENQRRELEKLRAELEAERAGWRAERRRFAARERQLREEAERERRQLADRLRSKWEAQRSRELRQLQEEMQREREAEIRQLLRWKEAEQRQLQQLLHRERDGVVRQARELQRQLAEELVNRGHCSRPGASEVSAAQCRCRLQEVLAQLRWQTDGEQAARIRYLQAALEVERQLFLKYILAHFRGHPALSGSPDPQAVHSLEEPLPQTSSGSCHAPKPACQLGSLDSLSAEVGVRSRSLGLVSSACSSSPDGLLSTHASSLDCFAPACSRSLDSTRSLPKASKSEERPSSPDTSTPGSRRLSPPPSPLPPPPPPSAHRKLSNPRGGEGSESQPCEVLTPSPPGLGHHELIKLNWLLAKALWVLARRCYTLQAENKQLRRAGCPYQADEKVKRLKVKRAELTGLARRLADRARKLQETNLRAVSAPIPGESCAGLELCQVFARQRARDLSEQASAPLAKDKQIEELRQECHLLQARVASGPCSDLHTGRGGPCTQWLNVRDLDRLQRESQREVLRLQRQLMLQQGNGGAWPEAGGQSATCEEVRRQMLALERELDQRRRECQELGAQAAPARRRGEEAETQLQAALLKNAWLAEENGRLQAKTDWVRKVEAENSEVRGHLGRACQERDASGLIAEQLLQQAARGQDRQQQLQRDPQKALCDLHPSWKEIQALQCRPGHPPEQPWETSQMPESQVKGSRRPKFHARPEDYAVSQPNRDIQEKREASLEESPVALGESASVPQVSETVPASQPLSKKTSSQSNSSSEGSMWATVPSSPTLDRDTASEVDDLEPDSVSLALEMGGSAAPAAPKLKIFMAQYNYNPFEGPNDHPEGELPLTAGDYIYIFGDMDEDGFYEGELEDGRRGLVPSNFVEQIPDSYIPGCLPAKSPDLGPSQLPAGQDEALEEDSLLSGKAQGVVDRGLCQMVRVGSKTEVATEILDTKTEACQLGLLQSMGKQGLSRPLLGTKGVLRMAPMQLHLQNVTATSANITWVYSSHRHPHVVYLDDREHALTPAGVSCYTFQGLCPGTHYRARVEVRLPRDLLQVYWGTMSSTVTFDTLLAGPPYPPLDVLVERHASPGVLVVSWLPVTIDSAGSSNGVQVTGYAVYADGLKVCEVADATAGSTLLEFSQLQVPLTWQKVSVRTMSLCGESLDSVPAQIPEDFFMCHRWPETPPFSYTCGDPSTYRVTFPVCPQKLSLAPPSAKASPHNPGSCGEPQAKFLEAFFEEPPRRQSPVSNLGSEGECPSSGAGSQAQELAEAWEGCRKDLLFQKSPQNHRPPSVSDQPGEKENCSQHMGTSKSPAPGFIHLRTECGPRKEPCQEKAALERVLRQKQDAQGFTPPQLGASQQYASDFHNVLKEEQEALCLDLWGTERREERREPEPHSRQGQALGVKRGCQLHEPSSALCPAPSAKVIKMPRGGPQQLGTGANTPARVFVALSDYNPLVMSANLKAAEEELVFQKRQLLRVWGSQDTHDFYLSECNRQVGNIPGRLVAEMEVGTEQTDRRWRSPAQGNLPSVAHLEDFQGLTIPQGSSLVLQGNSKRLPLWTPKIMIAALDYDPGDGQMGGQGKGRLALRAGDVVMVYGPMDDQGFYYGELGGHRGLVPAHLLDHMSLHGH</sequence>
<gene>
    <name type="primary">RIMBP3</name>
    <name type="synonym">KIAA1666</name>
    <name type="synonym">RIMBP3A</name>
</gene>